<protein>
    <recommendedName>
        <fullName evidence="4">Corazonin</fullName>
    </recommendedName>
</protein>
<dbReference type="GO" id="GO:0005576">
    <property type="term" value="C:extracellular region"/>
    <property type="evidence" value="ECO:0007669"/>
    <property type="project" value="UniProtKB-SubCell"/>
</dbReference>
<dbReference type="GO" id="GO:0007218">
    <property type="term" value="P:neuropeptide signaling pathway"/>
    <property type="evidence" value="ECO:0007669"/>
    <property type="project" value="UniProtKB-KW"/>
</dbReference>
<feature type="peptide" id="PRO_0000421702" description="Corazonin" evidence="3">
    <location>
        <begin position="1"/>
        <end position="11"/>
    </location>
</feature>
<feature type="modified residue" description="Pyrrolidone carboxylic acid" evidence="3">
    <location>
        <position position="1"/>
    </location>
</feature>
<feature type="modified residue" description="Asparagine amide" evidence="3">
    <location>
        <position position="11"/>
    </location>
</feature>
<comment type="function">
    <text evidence="1">Cardioactive peptide. Corazonin is probably involved in the physiological regulation of the heart beat (By similarity).</text>
</comment>
<comment type="subcellular location">
    <subcellularLocation>
        <location evidence="6">Secreted</location>
    </subcellularLocation>
</comment>
<comment type="similarity">
    <text evidence="2">Belongs to the corazonin family.</text>
</comment>
<reference evidence="5" key="1">
    <citation type="journal article" date="2012" name="Syst. Biol.">
        <title>Peptidomics-based phylogeny and biogeography of Mantophasmatodea (Hexapoda).</title>
        <authorList>
            <person name="Predel R."/>
            <person name="Neupert S."/>
            <person name="Huetteroth W."/>
            <person name="Kahnt J."/>
            <person name="Waidelich D."/>
            <person name="Roth S."/>
        </authorList>
    </citation>
    <scope>PROTEIN SEQUENCE</scope>
    <scope>PYROGLUTAMATE FORMATION AT GLN-1</scope>
    <scope>AMIDATION AT ASN-11</scope>
    <source>
        <tissue evidence="3">Corpora cardiaca</tissue>
    </source>
</reference>
<organism>
    <name type="scientific">Austrophasma rawsonvillense</name>
    <name type="common">Gladiator</name>
    <name type="synonym">Heel-walker</name>
    <dbReference type="NCBI Taxonomy" id="253137"/>
    <lineage>
        <taxon>Eukaryota</taxon>
        <taxon>Metazoa</taxon>
        <taxon>Ecdysozoa</taxon>
        <taxon>Arthropoda</taxon>
        <taxon>Hexapoda</taxon>
        <taxon>Insecta</taxon>
        <taxon>Pterygota</taxon>
        <taxon>Neoptera</taxon>
        <taxon>Polyneoptera</taxon>
        <taxon>Mantophasmatodea</taxon>
        <taxon>Austrophasmatidae</taxon>
        <taxon>Austrophasma</taxon>
    </lineage>
</organism>
<accession>B3A0B6</accession>
<name>CORZ_AUSRA</name>
<sequence length="11" mass="1368">QTFHYSQGWTN</sequence>
<evidence type="ECO:0000250" key="1">
    <source>
        <dbReference type="UniProtKB" id="Q26377"/>
    </source>
</evidence>
<evidence type="ECO:0000255" key="2"/>
<evidence type="ECO:0000269" key="3">
    <source>
    </source>
</evidence>
<evidence type="ECO:0000303" key="4">
    <source>
    </source>
</evidence>
<evidence type="ECO:0000305" key="5"/>
<evidence type="ECO:0000305" key="6">
    <source>
    </source>
</evidence>
<keyword id="KW-0027">Amidation</keyword>
<keyword id="KW-0903">Direct protein sequencing</keyword>
<keyword id="KW-0527">Neuropeptide</keyword>
<keyword id="KW-0873">Pyrrolidone carboxylic acid</keyword>
<keyword id="KW-0964">Secreted</keyword>
<proteinExistence type="evidence at protein level"/>